<comment type="subcellular location">
    <subcellularLocation>
        <location>Mitochondrion</location>
    </subcellularLocation>
    <subcellularLocation>
        <location evidence="1">Membrane</location>
        <topology evidence="1">Single-pass membrane protein</topology>
    </subcellularLocation>
</comment>
<comment type="similarity">
    <text evidence="5">Belongs to the LCL3 family.</text>
</comment>
<protein>
    <recommendedName>
        <fullName>Probable endonuclease LCL3</fullName>
        <ecNumber>3.1.-.-</ecNumber>
    </recommendedName>
</protein>
<dbReference type="EC" id="3.1.-.-"/>
<dbReference type="EMBL" id="KN305541">
    <property type="protein sequence ID" value="EEH16076.1"/>
    <property type="molecule type" value="Genomic_DNA"/>
</dbReference>
<dbReference type="SMR" id="C0SEQ8"/>
<dbReference type="VEuPathDB" id="FungiDB:PABG_06163"/>
<dbReference type="HOGENOM" id="CLU_046484_0_1_1"/>
<dbReference type="OrthoDB" id="26433at33183"/>
<dbReference type="GO" id="GO:0016020">
    <property type="term" value="C:membrane"/>
    <property type="evidence" value="ECO:0007669"/>
    <property type="project" value="UniProtKB-SubCell"/>
</dbReference>
<dbReference type="GO" id="GO:0005739">
    <property type="term" value="C:mitochondrion"/>
    <property type="evidence" value="ECO:0007669"/>
    <property type="project" value="UniProtKB-SubCell"/>
</dbReference>
<dbReference type="GO" id="GO:0004519">
    <property type="term" value="F:endonuclease activity"/>
    <property type="evidence" value="ECO:0007669"/>
    <property type="project" value="UniProtKB-KW"/>
</dbReference>
<dbReference type="GO" id="GO:0046872">
    <property type="term" value="F:metal ion binding"/>
    <property type="evidence" value="ECO:0007669"/>
    <property type="project" value="UniProtKB-KW"/>
</dbReference>
<dbReference type="FunFam" id="2.40.50.90:FF:000029">
    <property type="entry name" value="Probable endonuclease lcl3"/>
    <property type="match status" value="1"/>
</dbReference>
<dbReference type="Gene3D" id="2.40.50.90">
    <property type="match status" value="1"/>
</dbReference>
<dbReference type="InterPro" id="IPR035437">
    <property type="entry name" value="SNase_OB-fold_sf"/>
</dbReference>
<dbReference type="InterPro" id="IPR016071">
    <property type="entry name" value="Staphylococal_nuclease_OB-fold"/>
</dbReference>
<dbReference type="PANTHER" id="PTHR12302">
    <property type="entry name" value="EBNA2 BINDING PROTEIN P100"/>
    <property type="match status" value="1"/>
</dbReference>
<dbReference type="PANTHER" id="PTHR12302:SF3">
    <property type="entry name" value="SERINE_THREONINE-PROTEIN KINASE 31"/>
    <property type="match status" value="1"/>
</dbReference>
<dbReference type="Pfam" id="PF00565">
    <property type="entry name" value="SNase"/>
    <property type="match status" value="1"/>
</dbReference>
<dbReference type="SMART" id="SM00318">
    <property type="entry name" value="SNc"/>
    <property type="match status" value="1"/>
</dbReference>
<dbReference type="SUPFAM" id="SSF50199">
    <property type="entry name" value="Staphylococcal nuclease"/>
    <property type="match status" value="1"/>
</dbReference>
<dbReference type="PROSITE" id="PS50830">
    <property type="entry name" value="TNASE_3"/>
    <property type="match status" value="1"/>
</dbReference>
<keyword id="KW-0106">Calcium</keyword>
<keyword id="KW-0255">Endonuclease</keyword>
<keyword id="KW-0378">Hydrolase</keyword>
<keyword id="KW-0472">Membrane</keyword>
<keyword id="KW-0479">Metal-binding</keyword>
<keyword id="KW-0496">Mitochondrion</keyword>
<keyword id="KW-0540">Nuclease</keyword>
<keyword id="KW-0812">Transmembrane</keyword>
<keyword id="KW-1133">Transmembrane helix</keyword>
<evidence type="ECO:0000250" key="1"/>
<evidence type="ECO:0000255" key="2"/>
<evidence type="ECO:0000255" key="3">
    <source>
        <dbReference type="PROSITE-ProRule" id="PRU00272"/>
    </source>
</evidence>
<evidence type="ECO:0000256" key="4">
    <source>
        <dbReference type="SAM" id="MobiDB-lite"/>
    </source>
</evidence>
<evidence type="ECO:0000305" key="5"/>
<sequence length="342" mass="38491">MRWLFWSSGSQQAPNSNKDNNNNNDGDDDNNNIIINNINRRPPLTLECPSPSHPPCASCSTKATTSPSNPKRGWNTSLTARDWAGEFKDPRNLIPTLLLTGGILFCVRIHRQYLRRIPLATNISPTYFHKRSLFGRVTSVGDGDNFRMYHTPGGRLAGWEWLPFRRVPRVKKELKDRTIHIRLAGIDAPELPHFGRPAQPYSHAAHTWLTNYLLNKRVRAFPYRQDQYGRVVATVYVRRFPWIFLRRDVGLQMLRAGMATVYEAKSGVEFGGEGKESKYRRAEEMAKRRGRGLWKGWKGAGWESPREYKNRMAGVEGERAAAGGGGGGVGGMGELGVNGGKN</sequence>
<organism>
    <name type="scientific">Paracoccidioides brasiliensis (strain Pb03)</name>
    <dbReference type="NCBI Taxonomy" id="482561"/>
    <lineage>
        <taxon>Eukaryota</taxon>
        <taxon>Fungi</taxon>
        <taxon>Dikarya</taxon>
        <taxon>Ascomycota</taxon>
        <taxon>Pezizomycotina</taxon>
        <taxon>Eurotiomycetes</taxon>
        <taxon>Eurotiomycetidae</taxon>
        <taxon>Onygenales</taxon>
        <taxon>Ajellomycetaceae</taxon>
        <taxon>Paracoccidioides</taxon>
    </lineage>
</organism>
<proteinExistence type="inferred from homology"/>
<name>LCL3_PARBP</name>
<feature type="chain" id="PRO_0000408672" description="Probable endonuclease LCL3">
    <location>
        <begin position="1"/>
        <end position="342"/>
    </location>
</feature>
<feature type="transmembrane region" description="Helical" evidence="2">
    <location>
        <begin position="93"/>
        <end position="109"/>
    </location>
</feature>
<feature type="domain" description="TNase-like" evidence="3">
    <location>
        <begin position="131"/>
        <end position="296"/>
    </location>
</feature>
<feature type="region of interest" description="Disordered" evidence="4">
    <location>
        <begin position="1"/>
        <end position="75"/>
    </location>
</feature>
<feature type="region of interest" description="Disordered" evidence="4">
    <location>
        <begin position="319"/>
        <end position="342"/>
    </location>
</feature>
<feature type="compositionally biased region" description="Low complexity" evidence="4">
    <location>
        <begin position="15"/>
        <end position="24"/>
    </location>
</feature>
<feature type="compositionally biased region" description="Polar residues" evidence="4">
    <location>
        <begin position="61"/>
        <end position="75"/>
    </location>
</feature>
<feature type="compositionally biased region" description="Gly residues" evidence="4">
    <location>
        <begin position="322"/>
        <end position="342"/>
    </location>
</feature>
<feature type="active site" evidence="3">
    <location>
        <position position="182"/>
    </location>
</feature>
<feature type="active site" evidence="3">
    <location>
        <position position="190"/>
    </location>
</feature>
<feature type="active site" evidence="3">
    <location>
        <position position="230"/>
    </location>
</feature>
<feature type="binding site" evidence="3">
    <location>
        <position position="187"/>
    </location>
    <ligand>
        <name>Ca(2+)</name>
        <dbReference type="ChEBI" id="CHEBI:29108"/>
    </ligand>
</feature>
<accession>C0SEQ8</accession>
<gene>
    <name type="primary">LCL3</name>
    <name type="ORF">PABG_06163</name>
</gene>
<reference key="1">
    <citation type="journal article" date="2011" name="PLoS Genet.">
        <title>Comparative genomic analysis of human fungal pathogens causing paracoccidioidomycosis.</title>
        <authorList>
            <person name="Desjardins C.A."/>
            <person name="Champion M.D."/>
            <person name="Holder J.W."/>
            <person name="Muszewska A."/>
            <person name="Goldberg J."/>
            <person name="Bailao A.M."/>
            <person name="Brigido M.M."/>
            <person name="Ferreira M.E."/>
            <person name="Garcia A.M."/>
            <person name="Grynberg M."/>
            <person name="Gujja S."/>
            <person name="Heiman D.I."/>
            <person name="Henn M.R."/>
            <person name="Kodira C.D."/>
            <person name="Leon-Narvaez H."/>
            <person name="Longo L.V.G."/>
            <person name="Ma L.-J."/>
            <person name="Malavazi I."/>
            <person name="Matsuo A.L."/>
            <person name="Morais F.V."/>
            <person name="Pereira M."/>
            <person name="Rodriguez-Brito S."/>
            <person name="Sakthikumar S."/>
            <person name="Salem-Izacc S.M."/>
            <person name="Sykes S.M."/>
            <person name="Teixeira M.M."/>
            <person name="Vallejo M.C."/>
            <person name="Walter M.E."/>
            <person name="Yandava C."/>
            <person name="Young S."/>
            <person name="Zeng Q."/>
            <person name="Zucker J."/>
            <person name="Felipe M.S."/>
            <person name="Goldman G.H."/>
            <person name="Haas B.J."/>
            <person name="McEwen J.G."/>
            <person name="Nino-Vega G."/>
            <person name="Puccia R."/>
            <person name="San-Blas G."/>
            <person name="Soares C.M."/>
            <person name="Birren B.W."/>
            <person name="Cuomo C.A."/>
        </authorList>
    </citation>
    <scope>NUCLEOTIDE SEQUENCE [LARGE SCALE GENOMIC DNA]</scope>
    <source>
        <strain>Pb03</strain>
    </source>
</reference>